<name>Y066_RICPR</name>
<proteinExistence type="predicted"/>
<accession>Q9ZE80</accession>
<reference key="1">
    <citation type="journal article" date="1998" name="Nature">
        <title>The genome sequence of Rickettsia prowazekii and the origin of mitochondria.</title>
        <authorList>
            <person name="Andersson S.G.E."/>
            <person name="Zomorodipour A."/>
            <person name="Andersson J.O."/>
            <person name="Sicheritz-Ponten T."/>
            <person name="Alsmark U.C.M."/>
            <person name="Podowski R.M."/>
            <person name="Naeslund A.K."/>
            <person name="Eriksson A.-S."/>
            <person name="Winkler H.H."/>
            <person name="Kurland C.G."/>
        </authorList>
    </citation>
    <scope>NUCLEOTIDE SEQUENCE [LARGE SCALE GENOMIC DNA]</scope>
    <source>
        <strain>Madrid E</strain>
    </source>
</reference>
<gene>
    <name type="ordered locus">RP066</name>
</gene>
<sequence length="222" mass="24971">MTNNSKICLVSLICISGIYFGYQYYQNSKPVITIYPDNLPPKIRPSIIENNQVASVYSNIYENLITQDTNIQTVKLLPDPEQPMIIDSRNQSQNDKIFDRMSTLIPLIESNNNAKNATDLNIIKLEKVIKDKVSNAQNCRSNAGYKVQLGSVKSEAEAMAEGAKIKKKFPKILKNVVITTKKVKYDDGKFFYLILAGEYSSLSQAQAVCKKLAYNKQSCVLK</sequence>
<dbReference type="EMBL" id="AJ235270">
    <property type="protein sequence ID" value="CAA14537.1"/>
    <property type="molecule type" value="Genomic_DNA"/>
</dbReference>
<dbReference type="PIR" id="B71715">
    <property type="entry name" value="B71715"/>
</dbReference>
<dbReference type="RefSeq" id="NP_220460.1">
    <property type="nucleotide sequence ID" value="NC_000963.1"/>
</dbReference>
<dbReference type="RefSeq" id="WP_004599724.1">
    <property type="nucleotide sequence ID" value="NC_000963.1"/>
</dbReference>
<dbReference type="SMR" id="Q9ZE80"/>
<dbReference type="STRING" id="272947.gene:17555149"/>
<dbReference type="EnsemblBacteria" id="CAA14537">
    <property type="protein sequence ID" value="CAA14537"/>
    <property type="gene ID" value="CAA14537"/>
</dbReference>
<dbReference type="KEGG" id="rpr:RP066"/>
<dbReference type="PATRIC" id="fig|272947.5.peg.67"/>
<dbReference type="eggNOG" id="COG3087">
    <property type="taxonomic scope" value="Bacteria"/>
</dbReference>
<dbReference type="HOGENOM" id="CLU_1234243_0_0_5"/>
<dbReference type="OrthoDB" id="7161131at2"/>
<dbReference type="Proteomes" id="UP000002480">
    <property type="component" value="Chromosome"/>
</dbReference>
<dbReference type="GO" id="GO:0016020">
    <property type="term" value="C:membrane"/>
    <property type="evidence" value="ECO:0007669"/>
    <property type="project" value="UniProtKB-SubCell"/>
</dbReference>
<dbReference type="GO" id="GO:0042834">
    <property type="term" value="F:peptidoglycan binding"/>
    <property type="evidence" value="ECO:0007669"/>
    <property type="project" value="InterPro"/>
</dbReference>
<dbReference type="Gene3D" id="3.30.70.1070">
    <property type="entry name" value="Sporulation related repeat"/>
    <property type="match status" value="1"/>
</dbReference>
<dbReference type="InterPro" id="IPR007730">
    <property type="entry name" value="SPOR-like_dom"/>
</dbReference>
<dbReference type="InterPro" id="IPR036680">
    <property type="entry name" value="SPOR-like_sf"/>
</dbReference>
<dbReference type="Pfam" id="PF05036">
    <property type="entry name" value="SPOR"/>
    <property type="match status" value="1"/>
</dbReference>
<dbReference type="SUPFAM" id="SSF110997">
    <property type="entry name" value="Sporulation related repeat"/>
    <property type="match status" value="1"/>
</dbReference>
<dbReference type="PROSITE" id="PS51724">
    <property type="entry name" value="SPOR"/>
    <property type="match status" value="1"/>
</dbReference>
<organism>
    <name type="scientific">Rickettsia prowazekii (strain Madrid E)</name>
    <dbReference type="NCBI Taxonomy" id="272947"/>
    <lineage>
        <taxon>Bacteria</taxon>
        <taxon>Pseudomonadati</taxon>
        <taxon>Pseudomonadota</taxon>
        <taxon>Alphaproteobacteria</taxon>
        <taxon>Rickettsiales</taxon>
        <taxon>Rickettsiaceae</taxon>
        <taxon>Rickettsieae</taxon>
        <taxon>Rickettsia</taxon>
        <taxon>typhus group</taxon>
    </lineage>
</organism>
<protein>
    <recommendedName>
        <fullName>Uncharacterized protein RP066</fullName>
    </recommendedName>
</protein>
<keyword id="KW-0472">Membrane</keyword>
<keyword id="KW-1185">Reference proteome</keyword>
<keyword id="KW-0812">Transmembrane</keyword>
<keyword id="KW-1133">Transmembrane helix</keyword>
<evidence type="ECO:0000255" key="1"/>
<evidence type="ECO:0000305" key="2"/>
<feature type="chain" id="PRO_0000101309" description="Uncharacterized protein RP066">
    <location>
        <begin position="1"/>
        <end position="222"/>
    </location>
</feature>
<feature type="transmembrane region" description="Helical" evidence="1">
    <location>
        <begin position="7"/>
        <end position="26"/>
    </location>
</feature>
<feature type="domain" description="SPOR">
    <location>
        <begin position="139"/>
        <end position="222"/>
    </location>
</feature>
<comment type="subcellular location">
    <subcellularLocation>
        <location evidence="2">Membrane</location>
        <topology evidence="2">Single-pass membrane protein</topology>
    </subcellularLocation>
</comment>